<proteinExistence type="inferred from homology"/>
<keyword id="KW-0472">Membrane</keyword>
<keyword id="KW-0520">NAD</keyword>
<keyword id="KW-0521">NADP</keyword>
<keyword id="KW-0618">Plastoquinone</keyword>
<keyword id="KW-0874">Quinone</keyword>
<keyword id="KW-0793">Thylakoid</keyword>
<keyword id="KW-1278">Translocase</keyword>
<keyword id="KW-0812">Transmembrane</keyword>
<keyword id="KW-1133">Transmembrane helix</keyword>
<dbReference type="EC" id="7.1.1.-" evidence="1"/>
<dbReference type="EMBL" id="CP000111">
    <property type="protein sequence ID" value="ABB49224.1"/>
    <property type="molecule type" value="Genomic_DNA"/>
</dbReference>
<dbReference type="RefSeq" id="WP_011375728.1">
    <property type="nucleotide sequence ID" value="NC_007577.1"/>
</dbReference>
<dbReference type="SMR" id="Q31D21"/>
<dbReference type="STRING" id="74546.PMT9312_0162"/>
<dbReference type="KEGG" id="pmi:PMT9312_0162"/>
<dbReference type="eggNOG" id="COG1005">
    <property type="taxonomic scope" value="Bacteria"/>
</dbReference>
<dbReference type="HOGENOM" id="CLU_015134_0_1_3"/>
<dbReference type="OrthoDB" id="9803734at2"/>
<dbReference type="Proteomes" id="UP000002715">
    <property type="component" value="Chromosome"/>
</dbReference>
<dbReference type="GO" id="GO:0031676">
    <property type="term" value="C:plasma membrane-derived thylakoid membrane"/>
    <property type="evidence" value="ECO:0007669"/>
    <property type="project" value="UniProtKB-SubCell"/>
</dbReference>
<dbReference type="GO" id="GO:0003954">
    <property type="term" value="F:NADH dehydrogenase activity"/>
    <property type="evidence" value="ECO:0007669"/>
    <property type="project" value="TreeGrafter"/>
</dbReference>
<dbReference type="GO" id="GO:0016655">
    <property type="term" value="F:oxidoreductase activity, acting on NAD(P)H, quinone or similar compound as acceptor"/>
    <property type="evidence" value="ECO:0007669"/>
    <property type="project" value="UniProtKB-UniRule"/>
</dbReference>
<dbReference type="GO" id="GO:0048038">
    <property type="term" value="F:quinone binding"/>
    <property type="evidence" value="ECO:0007669"/>
    <property type="project" value="UniProtKB-KW"/>
</dbReference>
<dbReference type="GO" id="GO:0009060">
    <property type="term" value="P:aerobic respiration"/>
    <property type="evidence" value="ECO:0007669"/>
    <property type="project" value="TreeGrafter"/>
</dbReference>
<dbReference type="GO" id="GO:0019684">
    <property type="term" value="P:photosynthesis, light reaction"/>
    <property type="evidence" value="ECO:0007669"/>
    <property type="project" value="UniProtKB-UniRule"/>
</dbReference>
<dbReference type="HAMAP" id="MF_01350">
    <property type="entry name" value="NDH1_NuoH"/>
    <property type="match status" value="1"/>
</dbReference>
<dbReference type="InterPro" id="IPR001694">
    <property type="entry name" value="NADH_UbQ_OxRdtase_su1/FPO"/>
</dbReference>
<dbReference type="InterPro" id="IPR018086">
    <property type="entry name" value="NADH_UbQ_OxRdtase_su1_CS"/>
</dbReference>
<dbReference type="NCBIfam" id="NF004741">
    <property type="entry name" value="PRK06076.1-2"/>
    <property type="match status" value="1"/>
</dbReference>
<dbReference type="NCBIfam" id="NF004744">
    <property type="entry name" value="PRK06076.1-5"/>
    <property type="match status" value="1"/>
</dbReference>
<dbReference type="PANTHER" id="PTHR11432">
    <property type="entry name" value="NADH DEHYDROGENASE SUBUNIT 1"/>
    <property type="match status" value="1"/>
</dbReference>
<dbReference type="PANTHER" id="PTHR11432:SF3">
    <property type="entry name" value="NADH-UBIQUINONE OXIDOREDUCTASE CHAIN 1"/>
    <property type="match status" value="1"/>
</dbReference>
<dbReference type="Pfam" id="PF00146">
    <property type="entry name" value="NADHdh"/>
    <property type="match status" value="1"/>
</dbReference>
<dbReference type="PROSITE" id="PS00667">
    <property type="entry name" value="COMPLEX1_ND1_1"/>
    <property type="match status" value="1"/>
</dbReference>
<dbReference type="PROSITE" id="PS00668">
    <property type="entry name" value="COMPLEX1_ND1_2"/>
    <property type="match status" value="1"/>
</dbReference>
<name>NU1C_PROM9</name>
<gene>
    <name evidence="1" type="primary">ndhA</name>
    <name type="ordered locus">PMT9312_0162</name>
</gene>
<protein>
    <recommendedName>
        <fullName evidence="1">NAD(P)H-quinone oxidoreductase subunit 1</fullName>
        <ecNumber evidence="1">7.1.1.-</ecNumber>
    </recommendedName>
    <alternativeName>
        <fullName evidence="1">NAD(P)H dehydrogenase I subunit 1</fullName>
    </alternativeName>
    <alternativeName>
        <fullName evidence="1">NDH-1 subunit 1</fullName>
    </alternativeName>
    <alternativeName>
        <fullName evidence="1">NDH-A</fullName>
    </alternativeName>
</protein>
<reference key="1">
    <citation type="journal article" date="2006" name="Science">
        <title>Genomic islands and the ecology and evolution of Prochlorococcus.</title>
        <authorList>
            <person name="Coleman M.L."/>
            <person name="Sullivan M.B."/>
            <person name="Martiny A.C."/>
            <person name="Steglich C."/>
            <person name="Barry K."/>
            <person name="Delong E.F."/>
            <person name="Chisholm S.W."/>
        </authorList>
    </citation>
    <scope>NUCLEOTIDE SEQUENCE [LARGE SCALE GENOMIC DNA]</scope>
    <source>
        <strain>MIT 9312</strain>
    </source>
</reference>
<accession>Q31D21</accession>
<sequence>MEYGLDLEYSFNEFFKGFGLSSEIAHIIWLPIPMLLVLVAAVVGVLVTVWLERKISAAAQQRIGPEYAGALGVLQPIADGLKLLVKEDIIPAKADGILFTAGPILVLVPVILSWLIVPFGQNLLISNVGIGIFLWIALSSIQPIGLLMSGYASNNKYSLLGGLRAAAQSISYEIPLALSVLAIVLMTNSLSTIDIVNQQSGAGILSWNIWRQPVGFIVFWICALAECERLPFDLPEAEEELVAGYQTEYAGMKFALFYLGSYINLILSALLVSILYLGGWGFPIPVELIAKFLHLPINAPVIQVFTASIGIVMTVLKAYLLVFIAILLRWTTPRVRIDQLLDLGWKFLLPISLANLLITAGLKLAFPQFFGG</sequence>
<evidence type="ECO:0000255" key="1">
    <source>
        <dbReference type="HAMAP-Rule" id="MF_01350"/>
    </source>
</evidence>
<organism>
    <name type="scientific">Prochlorococcus marinus (strain MIT 9312)</name>
    <dbReference type="NCBI Taxonomy" id="74546"/>
    <lineage>
        <taxon>Bacteria</taxon>
        <taxon>Bacillati</taxon>
        <taxon>Cyanobacteriota</taxon>
        <taxon>Cyanophyceae</taxon>
        <taxon>Synechococcales</taxon>
        <taxon>Prochlorococcaceae</taxon>
        <taxon>Prochlorococcus</taxon>
    </lineage>
</organism>
<feature type="chain" id="PRO_0000240037" description="NAD(P)H-quinone oxidoreductase subunit 1">
    <location>
        <begin position="1"/>
        <end position="372"/>
    </location>
</feature>
<feature type="transmembrane region" description="Helical" evidence="1">
    <location>
        <begin position="27"/>
        <end position="47"/>
    </location>
</feature>
<feature type="transmembrane region" description="Helical" evidence="1">
    <location>
        <begin position="97"/>
        <end position="117"/>
    </location>
</feature>
<feature type="transmembrane region" description="Helical" evidence="1">
    <location>
        <begin position="128"/>
        <end position="148"/>
    </location>
</feature>
<feature type="transmembrane region" description="Helical" evidence="1">
    <location>
        <begin position="176"/>
        <end position="196"/>
    </location>
</feature>
<feature type="transmembrane region" description="Helical" evidence="1">
    <location>
        <begin position="204"/>
        <end position="224"/>
    </location>
</feature>
<feature type="transmembrane region" description="Helical" evidence="1">
    <location>
        <begin position="266"/>
        <end position="286"/>
    </location>
</feature>
<feature type="transmembrane region" description="Helical" evidence="1">
    <location>
        <begin position="308"/>
        <end position="328"/>
    </location>
</feature>
<feature type="transmembrane region" description="Helical" evidence="1">
    <location>
        <begin position="347"/>
        <end position="367"/>
    </location>
</feature>
<comment type="function">
    <text evidence="1">NDH-1 shuttles electrons from an unknown electron donor, via FMN and iron-sulfur (Fe-S) centers, to quinones in the respiratory and/or the photosynthetic chain. The immediate electron acceptor for the enzyme in this species is believed to be plastoquinone. Couples the redox reaction to proton translocation, and thus conserves the redox energy in a proton gradient.</text>
</comment>
<comment type="catalytic activity">
    <reaction evidence="1">
        <text>a plastoquinone + NADH + (n+1) H(+)(in) = a plastoquinol + NAD(+) + n H(+)(out)</text>
        <dbReference type="Rhea" id="RHEA:42608"/>
        <dbReference type="Rhea" id="RHEA-COMP:9561"/>
        <dbReference type="Rhea" id="RHEA-COMP:9562"/>
        <dbReference type="ChEBI" id="CHEBI:15378"/>
        <dbReference type="ChEBI" id="CHEBI:17757"/>
        <dbReference type="ChEBI" id="CHEBI:57540"/>
        <dbReference type="ChEBI" id="CHEBI:57945"/>
        <dbReference type="ChEBI" id="CHEBI:62192"/>
    </reaction>
</comment>
<comment type="catalytic activity">
    <reaction evidence="1">
        <text>a plastoquinone + NADPH + (n+1) H(+)(in) = a plastoquinol + NADP(+) + n H(+)(out)</text>
        <dbReference type="Rhea" id="RHEA:42612"/>
        <dbReference type="Rhea" id="RHEA-COMP:9561"/>
        <dbReference type="Rhea" id="RHEA-COMP:9562"/>
        <dbReference type="ChEBI" id="CHEBI:15378"/>
        <dbReference type="ChEBI" id="CHEBI:17757"/>
        <dbReference type="ChEBI" id="CHEBI:57783"/>
        <dbReference type="ChEBI" id="CHEBI:58349"/>
        <dbReference type="ChEBI" id="CHEBI:62192"/>
    </reaction>
</comment>
<comment type="subunit">
    <text evidence="1">NDH-1 is composed of at least 11 different subunits.</text>
</comment>
<comment type="subcellular location">
    <subcellularLocation>
        <location evidence="1">Cellular thylakoid membrane</location>
        <topology evidence="1">Multi-pass membrane protein</topology>
    </subcellularLocation>
</comment>
<comment type="similarity">
    <text evidence="1">Belongs to the complex I subunit 1 family.</text>
</comment>